<proteinExistence type="inferred from homology"/>
<accession>B6J2L3</accession>
<keyword id="KW-0067">ATP-binding</keyword>
<keyword id="KW-0119">Carbohydrate metabolism</keyword>
<keyword id="KW-0418">Kinase</keyword>
<keyword id="KW-0547">Nucleotide-binding</keyword>
<keyword id="KW-0808">Transferase</keyword>
<evidence type="ECO:0000255" key="1">
    <source>
        <dbReference type="HAMAP-Rule" id="MF_01270"/>
    </source>
</evidence>
<dbReference type="EC" id="2.7.1.170" evidence="1"/>
<dbReference type="EMBL" id="CP001019">
    <property type="protein sequence ID" value="ACJ19090.1"/>
    <property type="molecule type" value="Genomic_DNA"/>
</dbReference>
<dbReference type="RefSeq" id="WP_005770633.1">
    <property type="nucleotide sequence ID" value="NC_011527.1"/>
</dbReference>
<dbReference type="SMR" id="B6J2L3"/>
<dbReference type="KEGG" id="cbg:CbuG_1833"/>
<dbReference type="HOGENOM" id="CLU_038782_0_0_6"/>
<dbReference type="UniPathway" id="UPA00343"/>
<dbReference type="UniPathway" id="UPA00544"/>
<dbReference type="GO" id="GO:0005524">
    <property type="term" value="F:ATP binding"/>
    <property type="evidence" value="ECO:0007669"/>
    <property type="project" value="UniProtKB-UniRule"/>
</dbReference>
<dbReference type="GO" id="GO:0016301">
    <property type="term" value="F:kinase activity"/>
    <property type="evidence" value="ECO:0007669"/>
    <property type="project" value="UniProtKB-KW"/>
</dbReference>
<dbReference type="GO" id="GO:0016773">
    <property type="term" value="F:phosphotransferase activity, alcohol group as acceptor"/>
    <property type="evidence" value="ECO:0007669"/>
    <property type="project" value="UniProtKB-UniRule"/>
</dbReference>
<dbReference type="GO" id="GO:0097175">
    <property type="term" value="P:1,6-anhydro-N-acetyl-beta-muramic acid catabolic process"/>
    <property type="evidence" value="ECO:0007669"/>
    <property type="project" value="UniProtKB-UniRule"/>
</dbReference>
<dbReference type="GO" id="GO:0006040">
    <property type="term" value="P:amino sugar metabolic process"/>
    <property type="evidence" value="ECO:0007669"/>
    <property type="project" value="InterPro"/>
</dbReference>
<dbReference type="GO" id="GO:0009254">
    <property type="term" value="P:peptidoglycan turnover"/>
    <property type="evidence" value="ECO:0007669"/>
    <property type="project" value="UniProtKB-UniRule"/>
</dbReference>
<dbReference type="CDD" id="cd24050">
    <property type="entry name" value="ASKHA_NBD_ANMK"/>
    <property type="match status" value="1"/>
</dbReference>
<dbReference type="Gene3D" id="3.30.420.40">
    <property type="match status" value="2"/>
</dbReference>
<dbReference type="HAMAP" id="MF_01270">
    <property type="entry name" value="AnhMurNAc_kinase"/>
    <property type="match status" value="1"/>
</dbReference>
<dbReference type="InterPro" id="IPR005338">
    <property type="entry name" value="Anhydro_N_Ac-Mur_kinase"/>
</dbReference>
<dbReference type="InterPro" id="IPR043129">
    <property type="entry name" value="ATPase_NBD"/>
</dbReference>
<dbReference type="NCBIfam" id="NF007139">
    <property type="entry name" value="PRK09585.1-3"/>
    <property type="match status" value="1"/>
</dbReference>
<dbReference type="NCBIfam" id="NF007148">
    <property type="entry name" value="PRK09585.3-2"/>
    <property type="match status" value="1"/>
</dbReference>
<dbReference type="PANTHER" id="PTHR30605">
    <property type="entry name" value="ANHYDRO-N-ACETYLMURAMIC ACID KINASE"/>
    <property type="match status" value="1"/>
</dbReference>
<dbReference type="PANTHER" id="PTHR30605:SF0">
    <property type="entry name" value="ANHYDRO-N-ACETYLMURAMIC ACID KINASE"/>
    <property type="match status" value="1"/>
</dbReference>
<dbReference type="Pfam" id="PF03702">
    <property type="entry name" value="AnmK"/>
    <property type="match status" value="1"/>
</dbReference>
<dbReference type="SUPFAM" id="SSF53067">
    <property type="entry name" value="Actin-like ATPase domain"/>
    <property type="match status" value="1"/>
</dbReference>
<name>ANMK_COXB2</name>
<comment type="function">
    <text evidence="1">Catalyzes the specific phosphorylation of 1,6-anhydro-N-acetylmuramic acid (anhMurNAc) with the simultaneous cleavage of the 1,6-anhydro ring, generating MurNAc-6-P. Is required for the utilization of anhMurNAc either imported from the medium or derived from its own cell wall murein, and thus plays a role in cell wall recycling.</text>
</comment>
<comment type="catalytic activity">
    <reaction evidence="1">
        <text>1,6-anhydro-N-acetyl-beta-muramate + ATP + H2O = N-acetyl-D-muramate 6-phosphate + ADP + H(+)</text>
        <dbReference type="Rhea" id="RHEA:24952"/>
        <dbReference type="ChEBI" id="CHEBI:15377"/>
        <dbReference type="ChEBI" id="CHEBI:15378"/>
        <dbReference type="ChEBI" id="CHEBI:30616"/>
        <dbReference type="ChEBI" id="CHEBI:58690"/>
        <dbReference type="ChEBI" id="CHEBI:58722"/>
        <dbReference type="ChEBI" id="CHEBI:456216"/>
        <dbReference type="EC" id="2.7.1.170"/>
    </reaction>
</comment>
<comment type="pathway">
    <text evidence="1">Amino-sugar metabolism; 1,6-anhydro-N-acetylmuramate degradation.</text>
</comment>
<comment type="pathway">
    <text evidence="1">Cell wall biogenesis; peptidoglycan recycling.</text>
</comment>
<comment type="similarity">
    <text evidence="1">Belongs to the anhydro-N-acetylmuramic acid kinase family.</text>
</comment>
<organism>
    <name type="scientific">Coxiella burnetii (strain CbuG_Q212)</name>
    <name type="common">Coxiella burnetii (strain Q212)</name>
    <dbReference type="NCBI Taxonomy" id="434923"/>
    <lineage>
        <taxon>Bacteria</taxon>
        <taxon>Pseudomonadati</taxon>
        <taxon>Pseudomonadota</taxon>
        <taxon>Gammaproteobacteria</taxon>
        <taxon>Legionellales</taxon>
        <taxon>Coxiellaceae</taxon>
        <taxon>Coxiella</taxon>
    </lineage>
</organism>
<gene>
    <name evidence="1" type="primary">anmK</name>
    <name type="ordered locus">CbuG_1833</name>
</gene>
<feature type="chain" id="PRO_1000140152" description="Anhydro-N-acetylmuramic acid kinase">
    <location>
        <begin position="1"/>
        <end position="372"/>
    </location>
</feature>
<feature type="binding site" evidence="1">
    <location>
        <begin position="12"/>
        <end position="19"/>
    </location>
    <ligand>
        <name>ATP</name>
        <dbReference type="ChEBI" id="CHEBI:30616"/>
    </ligand>
</feature>
<sequence>MPKERYIGLISGTSMDALDTALVQFDPLKIIATHGEPIPTELKKNLVALSTGTDNSIPSMGETDVALGRLFGEAVLTLLEKAKVSSDSIQAIGSHGQTIRHMPNGKHPFTLQIGDPNTIAALTGITTVADFRRRDMALGGQGAPLAPAFHEFLLRDQSENRLILNIGGIANLTFLPRDPEKSTIGFDTGPGNTLLDAWCLMNLNKDYDDQGQWAASGRVQEKLVAQLLAEPYFQTPPPKSTGREYFNLNWLKKNLNGEKFDPVDIQATLVELTARSVANCCRNFSMDSGSLWLCGGGARNHHLVNRLKVLCKPLRVTTTEEIGIHPDWLEAVCFAWLAKQTLEKKPGNLPSVTGAKKSAILGAIYWGEKFNY</sequence>
<reference key="1">
    <citation type="journal article" date="2009" name="Infect. Immun.">
        <title>Comparative genomics reveal extensive transposon-mediated genomic plasticity and diversity among potential effector proteins within the genus Coxiella.</title>
        <authorList>
            <person name="Beare P.A."/>
            <person name="Unsworth N."/>
            <person name="Andoh M."/>
            <person name="Voth D.E."/>
            <person name="Omsland A."/>
            <person name="Gilk S.D."/>
            <person name="Williams K.P."/>
            <person name="Sobral B.W."/>
            <person name="Kupko J.J. III"/>
            <person name="Porcella S.F."/>
            <person name="Samuel J.E."/>
            <person name="Heinzen R.A."/>
        </authorList>
    </citation>
    <scope>NUCLEOTIDE SEQUENCE [LARGE SCALE GENOMIC DNA]</scope>
    <source>
        <strain>CbuG_Q212</strain>
    </source>
</reference>
<protein>
    <recommendedName>
        <fullName evidence="1">Anhydro-N-acetylmuramic acid kinase</fullName>
        <ecNumber evidence="1">2.7.1.170</ecNumber>
    </recommendedName>
    <alternativeName>
        <fullName evidence="1">AnhMurNAc kinase</fullName>
    </alternativeName>
</protein>